<gene>
    <name evidence="1" type="primary">dnaA</name>
    <name type="ordered locus">SAOUHSC_00001</name>
</gene>
<sequence>MSEKEIWEKVLEIAQEKLSAVSYSTFLKDTELYTIKDGEAIVLSSIPFNANWLNQQYAEIIQAILFDVVGYEVKPHFITTEELANYSNNETATPKETTKPSTETTEDNHVLGREQFNAHNTFDTFVIGPGNRFPHAASLAVAEAPAKAYNPLFIYGGVGLGKTHLMHAIGHHVLDNNPDAKVIYTSSEKFTNEFIKSIRDNEGEAFRERYRNIDVLLIDDIQFIQNKVQTQEEFFYTFNELHQNNKQIVISSDRPPKEIAQLEDRLRSRFEWGLIVDITPPDYETRMAILQKKIEEEKLDIPPEALNYIANQIQSNIRELEGALTRLLAYSQLLGKPITTELTAEALKDIIQAPKSKKITIQDIQKIVGQYYNVRIEDFSAKKRTKSIAYPRQIAMYLSRELTDFSLPKIGEEFGGRDHTTVIHAHEKISKDLKEDPIFKQEVENLEKEIRNV</sequence>
<evidence type="ECO:0000255" key="1">
    <source>
        <dbReference type="HAMAP-Rule" id="MF_00377"/>
    </source>
</evidence>
<evidence type="ECO:0000269" key="2">
    <source>
    </source>
</evidence>
<evidence type="ECO:0000269" key="3">
    <source>
    </source>
</evidence>
<proteinExistence type="evidence at protein level"/>
<organism>
    <name type="scientific">Staphylococcus aureus (strain NCTC 8325 / PS 47)</name>
    <dbReference type="NCBI Taxonomy" id="93061"/>
    <lineage>
        <taxon>Bacteria</taxon>
        <taxon>Bacillati</taxon>
        <taxon>Bacillota</taxon>
        <taxon>Bacilli</taxon>
        <taxon>Bacillales</taxon>
        <taxon>Staphylococcaceae</taxon>
        <taxon>Staphylococcus</taxon>
    </lineage>
</organism>
<dbReference type="EC" id="3.6.4.-" evidence="2"/>
<dbReference type="EMBL" id="CP000253">
    <property type="protein sequence ID" value="ABD29192.1"/>
    <property type="molecule type" value="Genomic_DNA"/>
</dbReference>
<dbReference type="RefSeq" id="WP_001290433.1">
    <property type="nucleotide sequence ID" value="NZ_LS483365.1"/>
</dbReference>
<dbReference type="RefSeq" id="YP_498609.1">
    <property type="nucleotide sequence ID" value="NC_007795.1"/>
</dbReference>
<dbReference type="SMR" id="Q2G2H5"/>
<dbReference type="STRING" id="93061.SAOUHSC_00001"/>
<dbReference type="PaxDb" id="1280-SAXN108_0001"/>
<dbReference type="GeneID" id="3919798"/>
<dbReference type="KEGG" id="sao:SAOUHSC_00001"/>
<dbReference type="PATRIC" id="fig|93061.5.peg.1"/>
<dbReference type="eggNOG" id="COG0593">
    <property type="taxonomic scope" value="Bacteria"/>
</dbReference>
<dbReference type="HOGENOM" id="CLU_026910_3_1_9"/>
<dbReference type="OrthoDB" id="9807019at2"/>
<dbReference type="PRO" id="PR:Q2G2H5"/>
<dbReference type="Proteomes" id="UP000008816">
    <property type="component" value="Chromosome"/>
</dbReference>
<dbReference type="GO" id="GO:0005737">
    <property type="term" value="C:cytoplasm"/>
    <property type="evidence" value="ECO:0007669"/>
    <property type="project" value="UniProtKB-SubCell"/>
</dbReference>
<dbReference type="GO" id="GO:0005886">
    <property type="term" value="C:plasma membrane"/>
    <property type="evidence" value="ECO:0000318"/>
    <property type="project" value="GO_Central"/>
</dbReference>
<dbReference type="GO" id="GO:0005524">
    <property type="term" value="F:ATP binding"/>
    <property type="evidence" value="ECO:0007669"/>
    <property type="project" value="UniProtKB-UniRule"/>
</dbReference>
<dbReference type="GO" id="GO:0016887">
    <property type="term" value="F:ATP hydrolysis activity"/>
    <property type="evidence" value="ECO:0007669"/>
    <property type="project" value="InterPro"/>
</dbReference>
<dbReference type="GO" id="GO:0003688">
    <property type="term" value="F:DNA replication origin binding"/>
    <property type="evidence" value="ECO:0000318"/>
    <property type="project" value="GO_Central"/>
</dbReference>
<dbReference type="GO" id="GO:0008289">
    <property type="term" value="F:lipid binding"/>
    <property type="evidence" value="ECO:0007669"/>
    <property type="project" value="UniProtKB-KW"/>
</dbReference>
<dbReference type="GO" id="GO:0006260">
    <property type="term" value="P:DNA replication"/>
    <property type="evidence" value="ECO:0000318"/>
    <property type="project" value="GO_Central"/>
</dbReference>
<dbReference type="GO" id="GO:0006270">
    <property type="term" value="P:DNA replication initiation"/>
    <property type="evidence" value="ECO:0000318"/>
    <property type="project" value="GO_Central"/>
</dbReference>
<dbReference type="GO" id="GO:0006275">
    <property type="term" value="P:regulation of DNA replication"/>
    <property type="evidence" value="ECO:0007669"/>
    <property type="project" value="UniProtKB-UniRule"/>
</dbReference>
<dbReference type="CDD" id="cd00009">
    <property type="entry name" value="AAA"/>
    <property type="match status" value="1"/>
</dbReference>
<dbReference type="CDD" id="cd06571">
    <property type="entry name" value="Bac_DnaA_C"/>
    <property type="match status" value="1"/>
</dbReference>
<dbReference type="FunFam" id="1.10.1750.10:FF:000003">
    <property type="entry name" value="Chromosomal replication initiator protein DnaA"/>
    <property type="match status" value="1"/>
</dbReference>
<dbReference type="FunFam" id="1.10.8.60:FF:000003">
    <property type="entry name" value="Chromosomal replication initiator protein DnaA"/>
    <property type="match status" value="1"/>
</dbReference>
<dbReference type="FunFam" id="3.40.50.300:FF:000150">
    <property type="entry name" value="Chromosomal replication initiator protein DnaA"/>
    <property type="match status" value="1"/>
</dbReference>
<dbReference type="Gene3D" id="1.10.1750.10">
    <property type="match status" value="1"/>
</dbReference>
<dbReference type="Gene3D" id="1.10.8.60">
    <property type="match status" value="1"/>
</dbReference>
<dbReference type="Gene3D" id="3.30.300.180">
    <property type="match status" value="1"/>
</dbReference>
<dbReference type="Gene3D" id="3.40.50.300">
    <property type="entry name" value="P-loop containing nucleotide triphosphate hydrolases"/>
    <property type="match status" value="1"/>
</dbReference>
<dbReference type="HAMAP" id="MF_00377">
    <property type="entry name" value="DnaA_bact"/>
    <property type="match status" value="1"/>
</dbReference>
<dbReference type="InterPro" id="IPR003593">
    <property type="entry name" value="AAA+_ATPase"/>
</dbReference>
<dbReference type="InterPro" id="IPR001957">
    <property type="entry name" value="Chromosome_initiator_DnaA"/>
</dbReference>
<dbReference type="InterPro" id="IPR020591">
    <property type="entry name" value="Chromosome_initiator_DnaA-like"/>
</dbReference>
<dbReference type="InterPro" id="IPR018312">
    <property type="entry name" value="Chromosome_initiator_DnaA_CS"/>
</dbReference>
<dbReference type="InterPro" id="IPR013159">
    <property type="entry name" value="DnaA_C"/>
</dbReference>
<dbReference type="InterPro" id="IPR013317">
    <property type="entry name" value="DnaA_dom"/>
</dbReference>
<dbReference type="InterPro" id="IPR024633">
    <property type="entry name" value="DnaA_N_dom"/>
</dbReference>
<dbReference type="InterPro" id="IPR038454">
    <property type="entry name" value="DnaA_N_sf"/>
</dbReference>
<dbReference type="InterPro" id="IPR027417">
    <property type="entry name" value="P-loop_NTPase"/>
</dbReference>
<dbReference type="InterPro" id="IPR010921">
    <property type="entry name" value="Trp_repressor/repl_initiator"/>
</dbReference>
<dbReference type="NCBIfam" id="TIGR00362">
    <property type="entry name" value="DnaA"/>
    <property type="match status" value="1"/>
</dbReference>
<dbReference type="PANTHER" id="PTHR30050">
    <property type="entry name" value="CHROMOSOMAL REPLICATION INITIATOR PROTEIN DNAA"/>
    <property type="match status" value="1"/>
</dbReference>
<dbReference type="PANTHER" id="PTHR30050:SF2">
    <property type="entry name" value="CHROMOSOMAL REPLICATION INITIATOR PROTEIN DNAA"/>
    <property type="match status" value="1"/>
</dbReference>
<dbReference type="Pfam" id="PF00308">
    <property type="entry name" value="Bac_DnaA"/>
    <property type="match status" value="1"/>
</dbReference>
<dbReference type="Pfam" id="PF08299">
    <property type="entry name" value="Bac_DnaA_C"/>
    <property type="match status" value="1"/>
</dbReference>
<dbReference type="Pfam" id="PF11638">
    <property type="entry name" value="DnaA_N"/>
    <property type="match status" value="1"/>
</dbReference>
<dbReference type="PRINTS" id="PR00051">
    <property type="entry name" value="DNAA"/>
</dbReference>
<dbReference type="SMART" id="SM00382">
    <property type="entry name" value="AAA"/>
    <property type="match status" value="1"/>
</dbReference>
<dbReference type="SMART" id="SM00760">
    <property type="entry name" value="Bac_DnaA_C"/>
    <property type="match status" value="1"/>
</dbReference>
<dbReference type="SUPFAM" id="SSF52540">
    <property type="entry name" value="P-loop containing nucleoside triphosphate hydrolases"/>
    <property type="match status" value="1"/>
</dbReference>
<dbReference type="SUPFAM" id="SSF48295">
    <property type="entry name" value="TrpR-like"/>
    <property type="match status" value="1"/>
</dbReference>
<dbReference type="PROSITE" id="PS01008">
    <property type="entry name" value="DNAA"/>
    <property type="match status" value="1"/>
</dbReference>
<keyword id="KW-0067">ATP-binding</keyword>
<keyword id="KW-0963">Cytoplasm</keyword>
<keyword id="KW-0235">DNA replication</keyword>
<keyword id="KW-0238">DNA-binding</keyword>
<keyword id="KW-0378">Hydrolase</keyword>
<keyword id="KW-0446">Lipid-binding</keyword>
<keyword id="KW-0547">Nucleotide-binding</keyword>
<keyword id="KW-1185">Reference proteome</keyword>
<reference key="1">
    <citation type="book" date="2006" name="Gram positive pathogens, 2nd edition">
        <title>The Staphylococcus aureus NCTC 8325 genome.</title>
        <editorList>
            <person name="Fischetti V."/>
            <person name="Novick R."/>
            <person name="Ferretti J."/>
            <person name="Portnoy D."/>
            <person name="Rood J."/>
        </editorList>
        <authorList>
            <person name="Gillaspy A.F."/>
            <person name="Worrell V."/>
            <person name="Orvis J."/>
            <person name="Roe B.A."/>
            <person name="Dyer D.W."/>
            <person name="Iandolo J.J."/>
        </authorList>
    </citation>
    <scope>NUCLEOTIDE SEQUENCE [LARGE SCALE GENOMIC DNA]</scope>
    <source>
        <strain>NCTC 8325 / PS 47</strain>
    </source>
</reference>
<reference key="2">
    <citation type="journal article" date="2009" name="J. Biol. Chem.">
        <title>Rapid exchange of bound ADP on the Staphylococcus aureus replication initiation protein DnaA.</title>
        <authorList>
            <person name="Kurokawa K."/>
            <person name="Mizumura H."/>
            <person name="Takaki T."/>
            <person name="Ishii Y."/>
            <person name="Ichihashi N."/>
            <person name="Lee B.L."/>
            <person name="Sekimizu K."/>
        </authorList>
    </citation>
    <scope>FUNCTION IN OPEN COMPLEX FORMATION</scope>
    <scope>ATPASE ACTIVITY</scope>
    <scope>CATALYTIC ACTIVITY</scope>
    <scope>ADP- AND ATP-BINDING</scope>
    <scope>MUTAGENESIS OF ARG-318</scope>
    <source>
        <strain>RN4220</strain>
    </source>
</reference>
<reference key="3">
    <citation type="journal article" date="2021" name="Nucleic Acids Res.">
        <title>Evidence for a chromosome origin unwinding system broadly conserved in bacteria.</title>
        <authorList>
            <person name="Pelliciari S."/>
            <person name="Dong M.J."/>
            <person name="Gao F."/>
            <person name="Murray H."/>
        </authorList>
    </citation>
    <scope>FUNCTION</scope>
    <scope>ATP-BINDING</scope>
    <scope>MUTAGENESIS OF ILE-195</scope>
</reference>
<feature type="chain" id="PRO_1000048733" description="Chromosomal replication initiator protein DnaA">
    <location>
        <begin position="1"/>
        <end position="453"/>
    </location>
</feature>
<feature type="region of interest" description="Domain I, interacts with DnaA modulators" evidence="1">
    <location>
        <begin position="1"/>
        <end position="71"/>
    </location>
</feature>
<feature type="region of interest" description="Domain II" evidence="1">
    <location>
        <begin position="71"/>
        <end position="114"/>
    </location>
</feature>
<feature type="region of interest" description="Domain III, AAA+ region" evidence="1">
    <location>
        <begin position="115"/>
        <end position="331"/>
    </location>
</feature>
<feature type="region of interest" description="Domain IV, binds dsDNA" evidence="1">
    <location>
        <begin position="332"/>
        <end position="453"/>
    </location>
</feature>
<feature type="binding site" evidence="1">
    <location>
        <position position="159"/>
    </location>
    <ligand>
        <name>ATP</name>
        <dbReference type="ChEBI" id="CHEBI:30616"/>
    </ligand>
</feature>
<feature type="binding site" evidence="1">
    <location>
        <position position="161"/>
    </location>
    <ligand>
        <name>ATP</name>
        <dbReference type="ChEBI" id="CHEBI:30616"/>
    </ligand>
</feature>
<feature type="binding site" evidence="1">
    <location>
        <position position="162"/>
    </location>
    <ligand>
        <name>ATP</name>
        <dbReference type="ChEBI" id="CHEBI:30616"/>
    </ligand>
</feature>
<feature type="binding site" evidence="1">
    <location>
        <position position="163"/>
    </location>
    <ligand>
        <name>ATP</name>
        <dbReference type="ChEBI" id="CHEBI:30616"/>
    </ligand>
</feature>
<feature type="mutagenesis site" description="No strand separation in vitro, does not oligomerize." evidence="3">
    <original>I</original>
    <variation>A</variation>
    <location>
        <position position="195"/>
    </location>
</feature>
<feature type="mutagenesis site" description="Binds ADP and ATP, greatly decreased ATPase activity, induces excessive chromosome replication in vivo, inhibits growth, dominant negative to wild-type." evidence="2">
    <original>R</original>
    <variation>H</variation>
    <location>
        <position position="318"/>
    </location>
</feature>
<accession>Q2G2H5</accession>
<protein>
    <recommendedName>
        <fullName evidence="1">Chromosomal replication initiator protein DnaA</fullName>
        <ecNumber evidence="2">3.6.4.-</ecNumber>
    </recommendedName>
</protein>
<name>DNAA_STAA8</name>
<comment type="function">
    <text evidence="1">Plays an essential role in the initiation and regulation of chromosomal replication. ATP-DnaA binds to the origin of replication (oriC) to initiate formation of the DNA replication initiation complex once per cell cycle. Binds the DnaA box (a 9 base pair repeat at the origin) and separates the double-stranded (ds)DNA. Forms a right-handed helical filament on oriC DNA; dsDNA binds to the exterior of the filament while single-stranded (ss)DNA is stabiized in the filament's interior. The ATP-DnaA-oriC complex binds and stabilizes one strand of the AT-rich DNA unwinding element (DUE), permitting loading of DNA polymerase. Binds acidic phospholipids.</text>
</comment>
<comment type="function">
    <text evidence="2 3">The DnaA box is 5'-TATNCACA-3' in this bacterium (PubMed:19841480). Strand separation requires the DnaA boxes and adjacent DnaA-trio motifs as well as ATP (PubMed:34197592). The half-life of ADP-DnaA is 1.5 minutes at 37 degrees Celsius (in E.coli the half-life is about 41 minutes); it exchanges very rapidly for ATP, DNA with or without an oriC region does not stabilize ATP-binding (PubMed:19841480). Melts the oriC region in vitro (open complex formation); melting requires ATP (not ADP) but not its hydrolysis (PubMed:19841480). The rapid exchange of ADP for ATP restores the replication initiation activity of DnaA; in E.coli the ADP-bound form is very stable and does not quickly exchange for ATP, suggesting S.aureus may have another mechanism to decreases levels of ATP-DnaA and delays replication initiation (PubMed:19841480).</text>
</comment>
<comment type="catalytic activity">
    <reaction evidence="2">
        <text>ATP + H2O = ADP + phosphate + H(+)</text>
        <dbReference type="Rhea" id="RHEA:13065"/>
        <dbReference type="ChEBI" id="CHEBI:15377"/>
        <dbReference type="ChEBI" id="CHEBI:15378"/>
        <dbReference type="ChEBI" id="CHEBI:30616"/>
        <dbReference type="ChEBI" id="CHEBI:43474"/>
        <dbReference type="ChEBI" id="CHEBI:456216"/>
    </reaction>
</comment>
<comment type="subunit">
    <text evidence="1">Oligomerizes as a right-handed, spiral filament on DNA at oriC.</text>
</comment>
<comment type="subcellular location">
    <subcellularLocation>
        <location evidence="1">Cytoplasm</location>
    </subcellularLocation>
</comment>
<comment type="domain">
    <text evidence="1">Domain I is involved in oligomerization and binding regulators, domain II is flexibile and of varying length in different bacteria, domain III forms the AAA+ region, while domain IV binds dsDNA.</text>
</comment>
<comment type="similarity">
    <text evidence="1">Belongs to the DnaA family.</text>
</comment>